<sequence>MTTTPRQPLFCAHADTNGDPGRCACGQQLADVGPATPPPPWCEPGTEPIWEQLTERYGGVTICQWTRYFPAGDPVAADVWIAADDRVVDGRVLRTQPAIHYTEPPVLGIGPAAARRLAAELLNAADTLDDGRRQLDDLGEHRR</sequence>
<organism>
    <name type="scientific">Mycobacterium tuberculosis (strain CDC 1551 / Oshkosh)</name>
    <dbReference type="NCBI Taxonomy" id="83331"/>
    <lineage>
        <taxon>Bacteria</taxon>
        <taxon>Bacillati</taxon>
        <taxon>Actinomycetota</taxon>
        <taxon>Actinomycetes</taxon>
        <taxon>Mycobacteriales</taxon>
        <taxon>Mycobacteriaceae</taxon>
        <taxon>Mycobacterium</taxon>
        <taxon>Mycobacterium tuberculosis complex</taxon>
    </lineage>
</organism>
<feature type="chain" id="PRO_0000427540" description="Uncharacterized protein MT2723">
    <location>
        <begin position="1"/>
        <end position="143"/>
    </location>
</feature>
<accession>P9WL50</accession>
<accession>L0TCZ1</accession>
<accession>P71944</accession>
<proteinExistence type="predicted"/>
<dbReference type="EMBL" id="AE000516">
    <property type="protein sequence ID" value="AAK47037.1"/>
    <property type="molecule type" value="Genomic_DNA"/>
</dbReference>
<dbReference type="PIR" id="A70965">
    <property type="entry name" value="A70965"/>
</dbReference>
<dbReference type="RefSeq" id="WP_003899409.1">
    <property type="nucleotide sequence ID" value="NZ_KK341227.1"/>
</dbReference>
<dbReference type="KEGG" id="mtc:MT2723"/>
<dbReference type="PATRIC" id="fig|83331.31.peg.2933"/>
<dbReference type="HOGENOM" id="CLU_1979116_0_0_11"/>
<dbReference type="Proteomes" id="UP000001020">
    <property type="component" value="Chromosome"/>
</dbReference>
<reference key="1">
    <citation type="journal article" date="2002" name="J. Bacteriol.">
        <title>Whole-genome comparison of Mycobacterium tuberculosis clinical and laboratory strains.</title>
        <authorList>
            <person name="Fleischmann R.D."/>
            <person name="Alland D."/>
            <person name="Eisen J.A."/>
            <person name="Carpenter L."/>
            <person name="White O."/>
            <person name="Peterson J.D."/>
            <person name="DeBoy R.T."/>
            <person name="Dodson R.J."/>
            <person name="Gwinn M.L."/>
            <person name="Haft D.H."/>
            <person name="Hickey E.K."/>
            <person name="Kolonay J.F."/>
            <person name="Nelson W.C."/>
            <person name="Umayam L.A."/>
            <person name="Ermolaeva M.D."/>
            <person name="Salzberg S.L."/>
            <person name="Delcher A."/>
            <person name="Utterback T.R."/>
            <person name="Weidman J.F."/>
            <person name="Khouri H.M."/>
            <person name="Gill J."/>
            <person name="Mikula A."/>
            <person name="Bishai W."/>
            <person name="Jacobs W.R. Jr."/>
            <person name="Venter J.C."/>
            <person name="Fraser C.M."/>
        </authorList>
    </citation>
    <scope>NUCLEOTIDE SEQUENCE [LARGE SCALE GENOMIC DNA]</scope>
    <source>
        <strain>CDC 1551 / Oshkosh</strain>
    </source>
</reference>
<name>Y2645_MYCTO</name>
<gene>
    <name type="ordered locus">MT2723</name>
</gene>
<keyword id="KW-1185">Reference proteome</keyword>
<protein>
    <recommendedName>
        <fullName>Uncharacterized protein MT2723</fullName>
    </recommendedName>
</protein>